<reference key="1">
    <citation type="journal article" date="1998" name="Nature">
        <title>The genome sequence of Rickettsia prowazekii and the origin of mitochondria.</title>
        <authorList>
            <person name="Andersson S.G.E."/>
            <person name="Zomorodipour A."/>
            <person name="Andersson J.O."/>
            <person name="Sicheritz-Ponten T."/>
            <person name="Alsmark U.C.M."/>
            <person name="Podowski R.M."/>
            <person name="Naeslund A.K."/>
            <person name="Eriksson A.-S."/>
            <person name="Winkler H.H."/>
            <person name="Kurland C.G."/>
        </authorList>
    </citation>
    <scope>NUCLEOTIDE SEQUENCE [LARGE SCALE GENOMIC DNA]</scope>
    <source>
        <strain>Madrid E</strain>
    </source>
</reference>
<reference key="2">
    <citation type="submission" date="2010-04" db="PDB data bank">
        <title>Crystal structure of methionine aminopeptidase from Rickettsia prowazekii.</title>
        <authorList>
            <consortium name="Seattle structural genomics center for infectious disease (SSGCID)"/>
            <person name="Edwards T.E."/>
            <person name="Abendroth J."/>
            <person name="Sankaran B."/>
        </authorList>
    </citation>
    <scope>X-RAY CRYSTALLOGRAPHY (2.00 ANGSTROMS) OF 3-249 IN COMPLEX WITH MANGANESE IONS</scope>
</reference>
<reference key="3">
    <citation type="submission" date="2010-05" db="PDB data bank">
        <title>Crystal structure of methionine aminopeptidase from Rickettsia prowazekii bound to methionine.</title>
        <authorList>
            <consortium name="Seattle Structural Genomics Center for Infectious Disease (SSGCID)"/>
            <person name="Edwards T.E."/>
            <person name="Abendroth J."/>
            <person name="Arakaki T."/>
            <person name="Sankaran B."/>
        </authorList>
    </citation>
    <scope>X-RAY CRYSTALLOGRAPHY (1.70 ANGSTROMS) OF 3-259 IN COMPLEX WITH MANGANESE IONS AND METHIONINE</scope>
</reference>
<organism>
    <name type="scientific">Rickettsia prowazekii (strain Madrid E)</name>
    <dbReference type="NCBI Taxonomy" id="272947"/>
    <lineage>
        <taxon>Bacteria</taxon>
        <taxon>Pseudomonadati</taxon>
        <taxon>Pseudomonadota</taxon>
        <taxon>Alphaproteobacteria</taxon>
        <taxon>Rickettsiales</taxon>
        <taxon>Rickettsiaceae</taxon>
        <taxon>Rickettsieae</taxon>
        <taxon>Rickettsia</taxon>
        <taxon>typhus group</taxon>
    </lineage>
</organism>
<keyword id="KW-0002">3D-structure</keyword>
<keyword id="KW-0031">Aminopeptidase</keyword>
<keyword id="KW-0378">Hydrolase</keyword>
<keyword id="KW-0479">Metal-binding</keyword>
<keyword id="KW-0645">Protease</keyword>
<keyword id="KW-1185">Reference proteome</keyword>
<name>MAP1_RICPR</name>
<evidence type="ECO:0000255" key="1">
    <source>
        <dbReference type="HAMAP-Rule" id="MF_01974"/>
    </source>
</evidence>
<evidence type="ECO:0000269" key="2">
    <source ref="2"/>
</evidence>
<evidence type="ECO:0000269" key="3">
    <source ref="3"/>
</evidence>
<evidence type="ECO:0007829" key="4">
    <source>
        <dbReference type="PDB" id="3MX6"/>
    </source>
</evidence>
<feature type="chain" id="PRO_0000148950" description="Methionine aminopeptidase">
    <location>
        <begin position="1"/>
        <end position="259"/>
    </location>
</feature>
<feature type="binding site" evidence="1">
    <location>
        <position position="78"/>
    </location>
    <ligand>
        <name>substrate</name>
    </ligand>
</feature>
<feature type="binding site" evidence="1 2 3">
    <location>
        <position position="95"/>
    </location>
    <ligand>
        <name>a divalent metal cation</name>
        <dbReference type="ChEBI" id="CHEBI:60240"/>
        <label>1</label>
    </ligand>
</feature>
<feature type="binding site" evidence="1 2 3">
    <location>
        <position position="106"/>
    </location>
    <ligand>
        <name>a divalent metal cation</name>
        <dbReference type="ChEBI" id="CHEBI:60240"/>
        <label>1</label>
    </ligand>
</feature>
<feature type="binding site" evidence="1 2 3">
    <location>
        <position position="106"/>
    </location>
    <ligand>
        <name>a divalent metal cation</name>
        <dbReference type="ChEBI" id="CHEBI:60240"/>
        <label>2</label>
        <note>catalytic</note>
    </ligand>
</feature>
<feature type="binding site" evidence="1 2 3">
    <location>
        <position position="169"/>
    </location>
    <ligand>
        <name>a divalent metal cation</name>
        <dbReference type="ChEBI" id="CHEBI:60240"/>
        <label>2</label>
        <note>catalytic</note>
    </ligand>
</feature>
<feature type="binding site" evidence="1 3">
    <location>
        <position position="176"/>
    </location>
    <ligand>
        <name>substrate</name>
    </ligand>
</feature>
<feature type="binding site" evidence="1 2 3">
    <location>
        <position position="202"/>
    </location>
    <ligand>
        <name>a divalent metal cation</name>
        <dbReference type="ChEBI" id="CHEBI:60240"/>
        <label>2</label>
        <note>catalytic</note>
    </ligand>
</feature>
<feature type="binding site" evidence="3">
    <location>
        <position position="220"/>
    </location>
    <ligand>
        <name>substrate</name>
    </ligand>
</feature>
<feature type="binding site" evidence="1 2 3">
    <location>
        <position position="234"/>
    </location>
    <ligand>
        <name>a divalent metal cation</name>
        <dbReference type="ChEBI" id="CHEBI:60240"/>
        <label>1</label>
    </ligand>
</feature>
<feature type="binding site" evidence="1 2 3">
    <location>
        <position position="234"/>
    </location>
    <ligand>
        <name>a divalent metal cation</name>
        <dbReference type="ChEBI" id="CHEBI:60240"/>
        <label>2</label>
        <note>catalytic</note>
    </ligand>
</feature>
<feature type="helix" evidence="4">
    <location>
        <begin position="8"/>
        <end position="28"/>
    </location>
</feature>
<feature type="helix" evidence="4">
    <location>
        <begin position="29"/>
        <end position="31"/>
    </location>
</feature>
<feature type="helix" evidence="4">
    <location>
        <begin position="38"/>
        <end position="51"/>
    </location>
</feature>
<feature type="turn" evidence="4">
    <location>
        <begin position="57"/>
        <end position="60"/>
    </location>
</feature>
<feature type="helix" evidence="4">
    <location>
        <begin position="61"/>
        <end position="63"/>
    </location>
</feature>
<feature type="strand" evidence="4">
    <location>
        <begin position="66"/>
        <end position="72"/>
    </location>
</feature>
<feature type="strand" evidence="4">
    <location>
        <begin position="75"/>
        <end position="77"/>
    </location>
</feature>
<feature type="strand" evidence="4">
    <location>
        <begin position="91"/>
        <end position="100"/>
    </location>
</feature>
<feature type="strand" evidence="4">
    <location>
        <begin position="103"/>
        <end position="112"/>
    </location>
</feature>
<feature type="helix" evidence="4">
    <location>
        <begin position="118"/>
        <end position="136"/>
    </location>
</feature>
<feature type="helix" evidence="4">
    <location>
        <begin position="144"/>
        <end position="157"/>
    </location>
</feature>
<feature type="strand" evidence="4">
    <location>
        <begin position="168"/>
        <end position="170"/>
    </location>
</feature>
<feature type="strand" evidence="4">
    <location>
        <begin position="172"/>
        <end position="181"/>
    </location>
</feature>
<feature type="strand" evidence="4">
    <location>
        <begin position="198"/>
        <end position="201"/>
    </location>
</feature>
<feature type="strand" evidence="4">
    <location>
        <begin position="204"/>
        <end position="208"/>
    </location>
</feature>
<feature type="strand" evidence="4">
    <location>
        <begin position="212"/>
        <end position="214"/>
    </location>
</feature>
<feature type="turn" evidence="4">
    <location>
        <begin position="216"/>
        <end position="218"/>
    </location>
</feature>
<feature type="strand" evidence="4">
    <location>
        <begin position="222"/>
        <end position="224"/>
    </location>
</feature>
<feature type="strand" evidence="4">
    <location>
        <begin position="230"/>
        <end position="232"/>
    </location>
</feature>
<feature type="strand" evidence="4">
    <location>
        <begin position="234"/>
        <end position="239"/>
    </location>
</feature>
<feature type="strand" evidence="4">
    <location>
        <begin position="241"/>
        <end position="247"/>
    </location>
</feature>
<accession>Q9ZCD3</accession>
<protein>
    <recommendedName>
        <fullName evidence="1">Methionine aminopeptidase</fullName>
        <shortName evidence="1">MAP</shortName>
        <shortName evidence="1">MetAP</shortName>
        <ecNumber evidence="1">3.4.11.18</ecNumber>
    </recommendedName>
    <alternativeName>
        <fullName evidence="1">Peptidase M</fullName>
    </alternativeName>
</protein>
<gene>
    <name evidence="1" type="primary">map</name>
    <name type="ordered locus">RP824</name>
</gene>
<sequence length="259" mass="28861">MTIKIHTEKDFIKMRAAGKLAAETLDFITDHVKPNVTTNSLNDLCHNFITSHNAIPAPLNYKGFPKSICTSINHVVCHGIPNDKPLKNGDIVNIDVTVILDGWYGDTSRMYYVGDVAIKPKRLIQVTYDAMMKGIEVVRPGAKLGDIGYAIQSYAEKHNYSVVRDYTGHGIGRVFHDKPSILNYGRNGTGLTLKEGMFFTVEPMINAGNYDTILSKLDGWTVTTRDKSLSAQFEHTIGVTKDGFEIFTLSPKKLDYPPY</sequence>
<dbReference type="EC" id="3.4.11.18" evidence="1"/>
<dbReference type="EMBL" id="AJ235273">
    <property type="protein sequence ID" value="CAA15249.1"/>
    <property type="molecule type" value="Genomic_DNA"/>
</dbReference>
<dbReference type="PIR" id="A71644">
    <property type="entry name" value="A71644"/>
</dbReference>
<dbReference type="RefSeq" id="NP_221173.1">
    <property type="nucleotide sequence ID" value="NC_000963.1"/>
</dbReference>
<dbReference type="RefSeq" id="WP_004599671.1">
    <property type="nucleotide sequence ID" value="NC_000963.1"/>
</dbReference>
<dbReference type="PDB" id="3MR1">
    <property type="method" value="X-ray"/>
    <property type="resolution" value="2.00 A"/>
    <property type="chains" value="A/B/C/D=3-249"/>
</dbReference>
<dbReference type="PDB" id="3MX6">
    <property type="method" value="X-ray"/>
    <property type="resolution" value="1.70 A"/>
    <property type="chains" value="A/B=3-259"/>
</dbReference>
<dbReference type="PDBsum" id="3MR1"/>
<dbReference type="PDBsum" id="3MX6"/>
<dbReference type="SMR" id="Q9ZCD3"/>
<dbReference type="STRING" id="272947.gene:17555893"/>
<dbReference type="MEROPS" id="M24.001"/>
<dbReference type="EnsemblBacteria" id="CAA15249">
    <property type="protein sequence ID" value="CAA15249"/>
    <property type="gene ID" value="CAA15249"/>
</dbReference>
<dbReference type="GeneID" id="57569946"/>
<dbReference type="KEGG" id="rpr:RP824"/>
<dbReference type="PATRIC" id="fig|272947.5.peg.860"/>
<dbReference type="eggNOG" id="COG0024">
    <property type="taxonomic scope" value="Bacteria"/>
</dbReference>
<dbReference type="HOGENOM" id="CLU_015857_0_0_5"/>
<dbReference type="OrthoDB" id="9802055at2"/>
<dbReference type="BRENDA" id="3.4.11.18">
    <property type="organism ID" value="5447"/>
</dbReference>
<dbReference type="EvolutionaryTrace" id="Q9ZCD3"/>
<dbReference type="Proteomes" id="UP000002480">
    <property type="component" value="Chromosome"/>
</dbReference>
<dbReference type="GO" id="GO:0004239">
    <property type="term" value="F:initiator methionyl aminopeptidase activity"/>
    <property type="evidence" value="ECO:0007669"/>
    <property type="project" value="UniProtKB-UniRule"/>
</dbReference>
<dbReference type="GO" id="GO:0046872">
    <property type="term" value="F:metal ion binding"/>
    <property type="evidence" value="ECO:0007669"/>
    <property type="project" value="UniProtKB-UniRule"/>
</dbReference>
<dbReference type="GO" id="GO:0070006">
    <property type="term" value="F:metalloaminopeptidase activity"/>
    <property type="evidence" value="ECO:0007669"/>
    <property type="project" value="UniProtKB-UniRule"/>
</dbReference>
<dbReference type="GO" id="GO:0006508">
    <property type="term" value="P:proteolysis"/>
    <property type="evidence" value="ECO:0007669"/>
    <property type="project" value="UniProtKB-KW"/>
</dbReference>
<dbReference type="CDD" id="cd01086">
    <property type="entry name" value="MetAP1"/>
    <property type="match status" value="1"/>
</dbReference>
<dbReference type="Gene3D" id="3.90.230.10">
    <property type="entry name" value="Creatinase/methionine aminopeptidase superfamily"/>
    <property type="match status" value="1"/>
</dbReference>
<dbReference type="HAMAP" id="MF_01974">
    <property type="entry name" value="MetAP_1"/>
    <property type="match status" value="1"/>
</dbReference>
<dbReference type="InterPro" id="IPR036005">
    <property type="entry name" value="Creatinase/aminopeptidase-like"/>
</dbReference>
<dbReference type="InterPro" id="IPR000994">
    <property type="entry name" value="Pept_M24"/>
</dbReference>
<dbReference type="InterPro" id="IPR001714">
    <property type="entry name" value="Pept_M24_MAP"/>
</dbReference>
<dbReference type="InterPro" id="IPR002467">
    <property type="entry name" value="Pept_M24A_MAP1"/>
</dbReference>
<dbReference type="NCBIfam" id="TIGR00500">
    <property type="entry name" value="met_pdase_I"/>
    <property type="match status" value="1"/>
</dbReference>
<dbReference type="NCBIfam" id="NF008970">
    <property type="entry name" value="PRK12318.1"/>
    <property type="match status" value="1"/>
</dbReference>
<dbReference type="PANTHER" id="PTHR43330">
    <property type="entry name" value="METHIONINE AMINOPEPTIDASE"/>
    <property type="match status" value="1"/>
</dbReference>
<dbReference type="PANTHER" id="PTHR43330:SF11">
    <property type="entry name" value="PEPTIDASE M24 DOMAIN-CONTAINING PROTEIN"/>
    <property type="match status" value="1"/>
</dbReference>
<dbReference type="Pfam" id="PF00557">
    <property type="entry name" value="Peptidase_M24"/>
    <property type="match status" value="1"/>
</dbReference>
<dbReference type="PRINTS" id="PR00599">
    <property type="entry name" value="MAPEPTIDASE"/>
</dbReference>
<dbReference type="SUPFAM" id="SSF55920">
    <property type="entry name" value="Creatinase/aminopeptidase"/>
    <property type="match status" value="1"/>
</dbReference>
<dbReference type="PROSITE" id="PS00680">
    <property type="entry name" value="MAP_1"/>
    <property type="match status" value="1"/>
</dbReference>
<comment type="function">
    <text evidence="1">Removes the N-terminal methionine from nascent proteins. The N-terminal methionine is often cleaved when the second residue in the primary sequence is small and uncharged (Met-Ala-, Cys, Gly, Pro, Ser, Thr, or Val). Requires deformylation of the N(alpha)-formylated initiator methionine before it can be hydrolyzed.</text>
</comment>
<comment type="catalytic activity">
    <reaction evidence="1">
        <text>Release of N-terminal amino acids, preferentially methionine, from peptides and arylamides.</text>
        <dbReference type="EC" id="3.4.11.18"/>
    </reaction>
</comment>
<comment type="cofactor">
    <cofactor evidence="1">
        <name>Co(2+)</name>
        <dbReference type="ChEBI" id="CHEBI:48828"/>
    </cofactor>
    <cofactor evidence="1">
        <name>Zn(2+)</name>
        <dbReference type="ChEBI" id="CHEBI:29105"/>
    </cofactor>
    <cofactor evidence="1 2 3">
        <name>Mn(2+)</name>
        <dbReference type="ChEBI" id="CHEBI:29035"/>
    </cofactor>
    <cofactor evidence="1">
        <name>Fe(2+)</name>
        <dbReference type="ChEBI" id="CHEBI:29033"/>
    </cofactor>
    <text evidence="1">Binds 2 divalent metal cations per subunit. Has a high-affinity and a low affinity metal-binding site. The true nature of the physiological cofactor is under debate. The enzyme is active with cobalt, zinc, manganese or divalent iron ions. Most likely, methionine aminopeptidases function as mononuclear Fe(2+)-metalloproteases under physiological conditions, and the catalytically relevant metal-binding site has been assigned to the histidine-containing high-affinity site.</text>
</comment>
<comment type="subunit">
    <text evidence="1">Monomer.</text>
</comment>
<comment type="similarity">
    <text evidence="1">Belongs to the peptidase M24A family. Methionine aminopeptidase type 1 subfamily.</text>
</comment>
<proteinExistence type="evidence at protein level"/>